<protein>
    <recommendedName>
        <fullName evidence="1">Peptidyl-tRNA hydrolase</fullName>
        <shortName evidence="1">Pth</shortName>
        <ecNumber evidence="1">3.1.1.29</ecNumber>
    </recommendedName>
</protein>
<evidence type="ECO:0000255" key="1">
    <source>
        <dbReference type="HAMAP-Rule" id="MF_00083"/>
    </source>
</evidence>
<feature type="chain" id="PRO_1000010658" description="Peptidyl-tRNA hydrolase">
    <location>
        <begin position="1"/>
        <end position="189"/>
    </location>
</feature>
<feature type="active site" description="Proton acceptor" evidence="1">
    <location>
        <position position="20"/>
    </location>
</feature>
<feature type="binding site" evidence="1">
    <location>
        <position position="15"/>
    </location>
    <ligand>
        <name>tRNA</name>
        <dbReference type="ChEBI" id="CHEBI:17843"/>
    </ligand>
</feature>
<feature type="binding site" evidence="1">
    <location>
        <position position="66"/>
    </location>
    <ligand>
        <name>tRNA</name>
        <dbReference type="ChEBI" id="CHEBI:17843"/>
    </ligand>
</feature>
<feature type="binding site" evidence="1">
    <location>
        <position position="68"/>
    </location>
    <ligand>
        <name>tRNA</name>
        <dbReference type="ChEBI" id="CHEBI:17843"/>
    </ligand>
</feature>
<feature type="binding site" evidence="1">
    <location>
        <position position="114"/>
    </location>
    <ligand>
        <name>tRNA</name>
        <dbReference type="ChEBI" id="CHEBI:17843"/>
    </ligand>
</feature>
<feature type="site" description="Discriminates between blocked and unblocked aminoacyl-tRNA" evidence="1">
    <location>
        <position position="10"/>
    </location>
</feature>
<feature type="site" description="Stabilizes the basic form of H active site to accept a proton" evidence="1">
    <location>
        <position position="93"/>
    </location>
</feature>
<sequence length="189" mass="21156">MVKLIVGLGNPGEKYIETKHNVGFMLVDKICKDLDLKFTADKIFQADIASTFLNGEKVYFVKPTTFMNESGKAVQALLAYYGLDIEDLLVIYDDLDMEVGKIRLRSKGSAGGHNGIKSIIKHIGSQEFKRIKIGIGRPKEGVTVVHHVLGKFDKDDYTTILNTLDKVDNAVNYYLQSGNFEQTMQKYNG</sequence>
<organism>
    <name type="scientific">Streptococcus sanguinis (strain SK36)</name>
    <dbReference type="NCBI Taxonomy" id="388919"/>
    <lineage>
        <taxon>Bacteria</taxon>
        <taxon>Bacillati</taxon>
        <taxon>Bacillota</taxon>
        <taxon>Bacilli</taxon>
        <taxon>Lactobacillales</taxon>
        <taxon>Streptococcaceae</taxon>
        <taxon>Streptococcus</taxon>
    </lineage>
</organism>
<accession>A3CJX1</accession>
<reference key="1">
    <citation type="journal article" date="2007" name="J. Bacteriol.">
        <title>Genome of the opportunistic pathogen Streptococcus sanguinis.</title>
        <authorList>
            <person name="Xu P."/>
            <person name="Alves J.M."/>
            <person name="Kitten T."/>
            <person name="Brown A."/>
            <person name="Chen Z."/>
            <person name="Ozaki L.S."/>
            <person name="Manque P."/>
            <person name="Ge X."/>
            <person name="Serrano M.G."/>
            <person name="Puiu D."/>
            <person name="Hendricks S."/>
            <person name="Wang Y."/>
            <person name="Chaplin M.D."/>
            <person name="Akan D."/>
            <person name="Paik S."/>
            <person name="Peterson D.L."/>
            <person name="Macrina F.L."/>
            <person name="Buck G.A."/>
        </authorList>
    </citation>
    <scope>NUCLEOTIDE SEQUENCE [LARGE SCALE GENOMIC DNA]</scope>
    <source>
        <strain>SK36</strain>
    </source>
</reference>
<name>PTH_STRSV</name>
<keyword id="KW-0963">Cytoplasm</keyword>
<keyword id="KW-0378">Hydrolase</keyword>
<keyword id="KW-1185">Reference proteome</keyword>
<keyword id="KW-0694">RNA-binding</keyword>
<keyword id="KW-0820">tRNA-binding</keyword>
<gene>
    <name evidence="1" type="primary">pth</name>
    <name type="ordered locus">SSA_0006</name>
</gene>
<proteinExistence type="inferred from homology"/>
<dbReference type="EC" id="3.1.1.29" evidence="1"/>
<dbReference type="EMBL" id="CP000387">
    <property type="protein sequence ID" value="ABN43476.1"/>
    <property type="molecule type" value="Genomic_DNA"/>
</dbReference>
<dbReference type="RefSeq" id="WP_011836278.1">
    <property type="nucleotide sequence ID" value="NC_009009.1"/>
</dbReference>
<dbReference type="RefSeq" id="YP_001034026.1">
    <property type="nucleotide sequence ID" value="NC_009009.1"/>
</dbReference>
<dbReference type="SMR" id="A3CJX1"/>
<dbReference type="STRING" id="388919.SSA_0006"/>
<dbReference type="KEGG" id="ssa:SSA_0006"/>
<dbReference type="PATRIC" id="fig|388919.9.peg.6"/>
<dbReference type="eggNOG" id="COG0193">
    <property type="taxonomic scope" value="Bacteria"/>
</dbReference>
<dbReference type="HOGENOM" id="CLU_062456_4_1_9"/>
<dbReference type="OrthoDB" id="9800507at2"/>
<dbReference type="Proteomes" id="UP000002148">
    <property type="component" value="Chromosome"/>
</dbReference>
<dbReference type="GO" id="GO:0005737">
    <property type="term" value="C:cytoplasm"/>
    <property type="evidence" value="ECO:0007669"/>
    <property type="project" value="UniProtKB-SubCell"/>
</dbReference>
<dbReference type="GO" id="GO:0004045">
    <property type="term" value="F:peptidyl-tRNA hydrolase activity"/>
    <property type="evidence" value="ECO:0007669"/>
    <property type="project" value="UniProtKB-UniRule"/>
</dbReference>
<dbReference type="GO" id="GO:0000049">
    <property type="term" value="F:tRNA binding"/>
    <property type="evidence" value="ECO:0007669"/>
    <property type="project" value="UniProtKB-UniRule"/>
</dbReference>
<dbReference type="GO" id="GO:0006515">
    <property type="term" value="P:protein quality control for misfolded or incompletely synthesized proteins"/>
    <property type="evidence" value="ECO:0007669"/>
    <property type="project" value="UniProtKB-UniRule"/>
</dbReference>
<dbReference type="GO" id="GO:0072344">
    <property type="term" value="P:rescue of stalled ribosome"/>
    <property type="evidence" value="ECO:0007669"/>
    <property type="project" value="UniProtKB-UniRule"/>
</dbReference>
<dbReference type="CDD" id="cd00462">
    <property type="entry name" value="PTH"/>
    <property type="match status" value="1"/>
</dbReference>
<dbReference type="FunFam" id="3.40.50.1470:FF:000001">
    <property type="entry name" value="Peptidyl-tRNA hydrolase"/>
    <property type="match status" value="1"/>
</dbReference>
<dbReference type="Gene3D" id="3.40.50.1470">
    <property type="entry name" value="Peptidyl-tRNA hydrolase"/>
    <property type="match status" value="1"/>
</dbReference>
<dbReference type="HAMAP" id="MF_00083">
    <property type="entry name" value="Pept_tRNA_hydro_bact"/>
    <property type="match status" value="1"/>
</dbReference>
<dbReference type="InterPro" id="IPR001328">
    <property type="entry name" value="Pept_tRNA_hydro"/>
</dbReference>
<dbReference type="InterPro" id="IPR018171">
    <property type="entry name" value="Pept_tRNA_hydro_CS"/>
</dbReference>
<dbReference type="InterPro" id="IPR036416">
    <property type="entry name" value="Pept_tRNA_hydro_sf"/>
</dbReference>
<dbReference type="NCBIfam" id="TIGR00447">
    <property type="entry name" value="pth"/>
    <property type="match status" value="1"/>
</dbReference>
<dbReference type="PANTHER" id="PTHR17224">
    <property type="entry name" value="PEPTIDYL-TRNA HYDROLASE"/>
    <property type="match status" value="1"/>
</dbReference>
<dbReference type="PANTHER" id="PTHR17224:SF1">
    <property type="entry name" value="PEPTIDYL-TRNA HYDROLASE"/>
    <property type="match status" value="1"/>
</dbReference>
<dbReference type="Pfam" id="PF01195">
    <property type="entry name" value="Pept_tRNA_hydro"/>
    <property type="match status" value="1"/>
</dbReference>
<dbReference type="SUPFAM" id="SSF53178">
    <property type="entry name" value="Peptidyl-tRNA hydrolase-like"/>
    <property type="match status" value="1"/>
</dbReference>
<dbReference type="PROSITE" id="PS01195">
    <property type="entry name" value="PEPT_TRNA_HYDROL_1"/>
    <property type="match status" value="1"/>
</dbReference>
<dbReference type="PROSITE" id="PS01196">
    <property type="entry name" value="PEPT_TRNA_HYDROL_2"/>
    <property type="match status" value="1"/>
</dbReference>
<comment type="function">
    <text evidence="1">Hydrolyzes ribosome-free peptidyl-tRNAs (with 1 or more amino acids incorporated), which drop off the ribosome during protein synthesis, or as a result of ribosome stalling.</text>
</comment>
<comment type="function">
    <text evidence="1">Catalyzes the release of premature peptidyl moieties from peptidyl-tRNA molecules trapped in stalled 50S ribosomal subunits, and thus maintains levels of free tRNAs and 50S ribosomes.</text>
</comment>
<comment type="catalytic activity">
    <reaction evidence="1">
        <text>an N-acyl-L-alpha-aminoacyl-tRNA + H2O = an N-acyl-L-amino acid + a tRNA + H(+)</text>
        <dbReference type="Rhea" id="RHEA:54448"/>
        <dbReference type="Rhea" id="RHEA-COMP:10123"/>
        <dbReference type="Rhea" id="RHEA-COMP:13883"/>
        <dbReference type="ChEBI" id="CHEBI:15377"/>
        <dbReference type="ChEBI" id="CHEBI:15378"/>
        <dbReference type="ChEBI" id="CHEBI:59874"/>
        <dbReference type="ChEBI" id="CHEBI:78442"/>
        <dbReference type="ChEBI" id="CHEBI:138191"/>
        <dbReference type="EC" id="3.1.1.29"/>
    </reaction>
</comment>
<comment type="subunit">
    <text evidence="1">Monomer.</text>
</comment>
<comment type="subcellular location">
    <subcellularLocation>
        <location evidence="1">Cytoplasm</location>
    </subcellularLocation>
</comment>
<comment type="similarity">
    <text evidence="1">Belongs to the PTH family.</text>
</comment>